<accession>A8APS7</accession>
<reference key="1">
    <citation type="submission" date="2007-08" db="EMBL/GenBank/DDBJ databases">
        <authorList>
            <consortium name="The Citrobacter koseri Genome Sequencing Project"/>
            <person name="McClelland M."/>
            <person name="Sanderson E.K."/>
            <person name="Porwollik S."/>
            <person name="Spieth J."/>
            <person name="Clifton W.S."/>
            <person name="Latreille P."/>
            <person name="Courtney L."/>
            <person name="Wang C."/>
            <person name="Pepin K."/>
            <person name="Bhonagiri V."/>
            <person name="Nash W."/>
            <person name="Johnson M."/>
            <person name="Thiruvilangam P."/>
            <person name="Wilson R."/>
        </authorList>
    </citation>
    <scope>NUCLEOTIDE SEQUENCE [LARGE SCALE GENOMIC DNA]</scope>
    <source>
        <strain>ATCC BAA-895 / CDC 4225-83 / SGSC4696</strain>
    </source>
</reference>
<gene>
    <name evidence="1" type="primary">ribB</name>
    <name type="ordered locus">CKO_04434</name>
</gene>
<keyword id="KW-0456">Lyase</keyword>
<keyword id="KW-0460">Magnesium</keyword>
<keyword id="KW-0464">Manganese</keyword>
<keyword id="KW-0479">Metal-binding</keyword>
<keyword id="KW-1185">Reference proteome</keyword>
<keyword id="KW-0686">Riboflavin biosynthesis</keyword>
<feature type="chain" id="PRO_1000040597" description="3,4-dihydroxy-2-butanone 4-phosphate synthase">
    <location>
        <begin position="1"/>
        <end position="217"/>
    </location>
</feature>
<feature type="binding site" evidence="1">
    <location>
        <begin position="37"/>
        <end position="38"/>
    </location>
    <ligand>
        <name>D-ribulose 5-phosphate</name>
        <dbReference type="ChEBI" id="CHEBI:58121"/>
    </ligand>
</feature>
<feature type="binding site" evidence="1">
    <location>
        <position position="38"/>
    </location>
    <ligand>
        <name>Mg(2+)</name>
        <dbReference type="ChEBI" id="CHEBI:18420"/>
        <label>1</label>
    </ligand>
</feature>
<feature type="binding site" evidence="1">
    <location>
        <position position="38"/>
    </location>
    <ligand>
        <name>Mg(2+)</name>
        <dbReference type="ChEBI" id="CHEBI:18420"/>
        <label>2</label>
    </ligand>
</feature>
<feature type="binding site" evidence="1">
    <location>
        <position position="42"/>
    </location>
    <ligand>
        <name>D-ribulose 5-phosphate</name>
        <dbReference type="ChEBI" id="CHEBI:58121"/>
    </ligand>
</feature>
<feature type="binding site" evidence="1">
    <location>
        <begin position="150"/>
        <end position="154"/>
    </location>
    <ligand>
        <name>D-ribulose 5-phosphate</name>
        <dbReference type="ChEBI" id="CHEBI:58121"/>
    </ligand>
</feature>
<feature type="binding site" evidence="1">
    <location>
        <position position="153"/>
    </location>
    <ligand>
        <name>Mg(2+)</name>
        <dbReference type="ChEBI" id="CHEBI:18420"/>
        <label>2</label>
    </ligand>
</feature>
<feature type="binding site" evidence="1">
    <location>
        <position position="174"/>
    </location>
    <ligand>
        <name>D-ribulose 5-phosphate</name>
        <dbReference type="ChEBI" id="CHEBI:58121"/>
    </ligand>
</feature>
<feature type="site" description="Essential for catalytic activity" evidence="1">
    <location>
        <position position="136"/>
    </location>
</feature>
<feature type="site" description="Essential for catalytic activity" evidence="1">
    <location>
        <position position="174"/>
    </location>
</feature>
<proteinExistence type="inferred from homology"/>
<name>RIBB_CITK8</name>
<dbReference type="EC" id="4.1.99.12" evidence="1"/>
<dbReference type="EMBL" id="CP000822">
    <property type="protein sequence ID" value="ABV15490.1"/>
    <property type="molecule type" value="Genomic_DNA"/>
</dbReference>
<dbReference type="RefSeq" id="WP_012135173.1">
    <property type="nucleotide sequence ID" value="NC_009792.1"/>
</dbReference>
<dbReference type="SMR" id="A8APS7"/>
<dbReference type="STRING" id="290338.CKO_04434"/>
<dbReference type="GeneID" id="45138008"/>
<dbReference type="KEGG" id="cko:CKO_04434"/>
<dbReference type="HOGENOM" id="CLU_020273_3_0_6"/>
<dbReference type="OrthoDB" id="9793111at2"/>
<dbReference type="UniPathway" id="UPA00275">
    <property type="reaction ID" value="UER00399"/>
</dbReference>
<dbReference type="Proteomes" id="UP000008148">
    <property type="component" value="Chromosome"/>
</dbReference>
<dbReference type="GO" id="GO:0005829">
    <property type="term" value="C:cytosol"/>
    <property type="evidence" value="ECO:0007669"/>
    <property type="project" value="TreeGrafter"/>
</dbReference>
<dbReference type="GO" id="GO:0008686">
    <property type="term" value="F:3,4-dihydroxy-2-butanone-4-phosphate synthase activity"/>
    <property type="evidence" value="ECO:0007669"/>
    <property type="project" value="UniProtKB-UniRule"/>
</dbReference>
<dbReference type="GO" id="GO:0000287">
    <property type="term" value="F:magnesium ion binding"/>
    <property type="evidence" value="ECO:0007669"/>
    <property type="project" value="UniProtKB-UniRule"/>
</dbReference>
<dbReference type="GO" id="GO:0030145">
    <property type="term" value="F:manganese ion binding"/>
    <property type="evidence" value="ECO:0007669"/>
    <property type="project" value="UniProtKB-UniRule"/>
</dbReference>
<dbReference type="GO" id="GO:0009231">
    <property type="term" value="P:riboflavin biosynthetic process"/>
    <property type="evidence" value="ECO:0007669"/>
    <property type="project" value="UniProtKB-UniRule"/>
</dbReference>
<dbReference type="FunFam" id="3.90.870.10:FF:000002">
    <property type="entry name" value="3,4-dihydroxy-2-butanone 4-phosphate synthase"/>
    <property type="match status" value="1"/>
</dbReference>
<dbReference type="Gene3D" id="3.90.870.10">
    <property type="entry name" value="DHBP synthase"/>
    <property type="match status" value="1"/>
</dbReference>
<dbReference type="HAMAP" id="MF_00180">
    <property type="entry name" value="RibB"/>
    <property type="match status" value="1"/>
</dbReference>
<dbReference type="InterPro" id="IPR017945">
    <property type="entry name" value="DHBP_synth_RibB-like_a/b_dom"/>
</dbReference>
<dbReference type="InterPro" id="IPR000422">
    <property type="entry name" value="DHBP_synthase_RibB"/>
</dbReference>
<dbReference type="NCBIfam" id="TIGR00506">
    <property type="entry name" value="ribB"/>
    <property type="match status" value="1"/>
</dbReference>
<dbReference type="PANTHER" id="PTHR21327:SF38">
    <property type="entry name" value="3,4-DIHYDROXY-2-BUTANONE 4-PHOSPHATE SYNTHASE"/>
    <property type="match status" value="1"/>
</dbReference>
<dbReference type="PANTHER" id="PTHR21327">
    <property type="entry name" value="GTP CYCLOHYDROLASE II-RELATED"/>
    <property type="match status" value="1"/>
</dbReference>
<dbReference type="Pfam" id="PF00926">
    <property type="entry name" value="DHBP_synthase"/>
    <property type="match status" value="1"/>
</dbReference>
<dbReference type="SUPFAM" id="SSF55821">
    <property type="entry name" value="YrdC/RibB"/>
    <property type="match status" value="1"/>
</dbReference>
<protein>
    <recommendedName>
        <fullName evidence="1">3,4-dihydroxy-2-butanone 4-phosphate synthase</fullName>
        <shortName evidence="1">DHBP synthase</shortName>
        <ecNumber evidence="1">4.1.99.12</ecNumber>
    </recommendedName>
</protein>
<organism>
    <name type="scientific">Citrobacter koseri (strain ATCC BAA-895 / CDC 4225-83 / SGSC4696)</name>
    <dbReference type="NCBI Taxonomy" id="290338"/>
    <lineage>
        <taxon>Bacteria</taxon>
        <taxon>Pseudomonadati</taxon>
        <taxon>Pseudomonadota</taxon>
        <taxon>Gammaproteobacteria</taxon>
        <taxon>Enterobacterales</taxon>
        <taxon>Enterobacteriaceae</taxon>
        <taxon>Citrobacter</taxon>
    </lineage>
</organism>
<comment type="function">
    <text evidence="1">Catalyzes the conversion of D-ribulose 5-phosphate to formate and 3,4-dihydroxy-2-butanone 4-phosphate.</text>
</comment>
<comment type="catalytic activity">
    <reaction evidence="1">
        <text>D-ribulose 5-phosphate = (2S)-2-hydroxy-3-oxobutyl phosphate + formate + H(+)</text>
        <dbReference type="Rhea" id="RHEA:18457"/>
        <dbReference type="ChEBI" id="CHEBI:15378"/>
        <dbReference type="ChEBI" id="CHEBI:15740"/>
        <dbReference type="ChEBI" id="CHEBI:58121"/>
        <dbReference type="ChEBI" id="CHEBI:58830"/>
        <dbReference type="EC" id="4.1.99.12"/>
    </reaction>
</comment>
<comment type="cofactor">
    <cofactor evidence="1">
        <name>Mg(2+)</name>
        <dbReference type="ChEBI" id="CHEBI:18420"/>
    </cofactor>
    <cofactor evidence="1">
        <name>Mn(2+)</name>
        <dbReference type="ChEBI" id="CHEBI:29035"/>
    </cofactor>
    <text evidence="1">Binds 2 divalent metal cations per subunit. Magnesium or manganese.</text>
</comment>
<comment type="pathway">
    <text evidence="1">Cofactor biosynthesis; riboflavin biosynthesis; 2-hydroxy-3-oxobutyl phosphate from D-ribulose 5-phosphate: step 1/1.</text>
</comment>
<comment type="subunit">
    <text evidence="1">Homodimer.</text>
</comment>
<comment type="similarity">
    <text evidence="1">Belongs to the DHBP synthase family.</text>
</comment>
<evidence type="ECO:0000255" key="1">
    <source>
        <dbReference type="HAMAP-Rule" id="MF_00180"/>
    </source>
</evidence>
<sequence length="217" mass="23249">MNQTLLSSFGTPFERVEHALSALREGRGVMVLDDEDRENEGDMIFPAETMTVEQMALTIRHGSGIVCLCITEDRRKQLDLPMMVENNTSAYGTGFTVTIEAAKGVTTGVSAADRVTTVRAAIADGAKPADLHRPGHVFPLRAQPGGVLTRGGHTEATIDLVTLAGFKPAGVLCELTNDDGTMARAPECIAFAGKHNMAVVTIEDLVAYRQAHERKAS</sequence>